<accession>Q8ENI7</accession>
<comment type="function">
    <text evidence="1">Part of the Sec protein translocase complex. Interacts with the SecYEG preprotein conducting channel. Has a central role in coupling the hydrolysis of ATP to the transfer of proteins into and across the cell membrane, serving as an ATP-driven molecular motor driving the stepwise translocation of polypeptide chains across the membrane.</text>
</comment>
<comment type="catalytic activity">
    <reaction evidence="1">
        <text>ATP + H2O + cellular proteinSide 1 = ADP + phosphate + cellular proteinSide 2.</text>
        <dbReference type="EC" id="7.4.2.8"/>
    </reaction>
</comment>
<comment type="cofactor">
    <cofactor evidence="1">
        <name>Zn(2+)</name>
        <dbReference type="ChEBI" id="CHEBI:29105"/>
    </cofactor>
    <text evidence="1">May bind 1 zinc ion per subunit.</text>
</comment>
<comment type="subunit">
    <text evidence="1">Monomer and homodimer. Part of the essential Sec protein translocation apparatus which comprises SecA, SecYEG and auxiliary proteins SecDF. Other proteins may also be involved.</text>
</comment>
<comment type="subcellular location">
    <subcellularLocation>
        <location evidence="1">Cell membrane</location>
        <topology evidence="1">Peripheral membrane protein</topology>
        <orientation evidence="1">Cytoplasmic side</orientation>
    </subcellularLocation>
    <subcellularLocation>
        <location evidence="1">Cytoplasm</location>
    </subcellularLocation>
    <text evidence="1">Distribution is 50-50.</text>
</comment>
<comment type="similarity">
    <text evidence="1">Belongs to the SecA family.</text>
</comment>
<reference key="1">
    <citation type="journal article" date="2002" name="Nucleic Acids Res.">
        <title>Genome sequence of Oceanobacillus iheyensis isolated from the Iheya Ridge and its unexpected adaptive capabilities to extreme environments.</title>
        <authorList>
            <person name="Takami H."/>
            <person name="Takaki Y."/>
            <person name="Uchiyama I."/>
        </authorList>
    </citation>
    <scope>NUCLEOTIDE SEQUENCE [LARGE SCALE GENOMIC DNA]</scope>
    <source>
        <strain>DSM 14371 / CIP 107618 / JCM 11309 / KCTC 3954 / HTE831</strain>
    </source>
</reference>
<feature type="chain" id="PRO_0000320875" description="Protein translocase subunit SecA">
    <location>
        <begin position="1"/>
        <end position="838"/>
    </location>
</feature>
<feature type="region of interest" description="Disordered" evidence="2">
    <location>
        <begin position="793"/>
        <end position="838"/>
    </location>
</feature>
<feature type="binding site" evidence="1">
    <location>
        <position position="86"/>
    </location>
    <ligand>
        <name>ATP</name>
        <dbReference type="ChEBI" id="CHEBI:30616"/>
    </ligand>
</feature>
<feature type="binding site" evidence="1">
    <location>
        <begin position="104"/>
        <end position="108"/>
    </location>
    <ligand>
        <name>ATP</name>
        <dbReference type="ChEBI" id="CHEBI:30616"/>
    </ligand>
</feature>
<feature type="binding site" evidence="1">
    <location>
        <position position="493"/>
    </location>
    <ligand>
        <name>ATP</name>
        <dbReference type="ChEBI" id="CHEBI:30616"/>
    </ligand>
</feature>
<feature type="binding site" evidence="1">
    <location>
        <position position="824"/>
    </location>
    <ligand>
        <name>Zn(2+)</name>
        <dbReference type="ChEBI" id="CHEBI:29105"/>
    </ligand>
</feature>
<feature type="binding site" evidence="1">
    <location>
        <position position="826"/>
    </location>
    <ligand>
        <name>Zn(2+)</name>
        <dbReference type="ChEBI" id="CHEBI:29105"/>
    </ligand>
</feature>
<feature type="binding site" evidence="1">
    <location>
        <position position="835"/>
    </location>
    <ligand>
        <name>Zn(2+)</name>
        <dbReference type="ChEBI" id="CHEBI:29105"/>
    </ligand>
</feature>
<feature type="binding site" evidence="1">
    <location>
        <position position="836"/>
    </location>
    <ligand>
        <name>Zn(2+)</name>
        <dbReference type="ChEBI" id="CHEBI:29105"/>
    </ligand>
</feature>
<organism>
    <name type="scientific">Oceanobacillus iheyensis (strain DSM 14371 / CIP 107618 / JCM 11309 / KCTC 3954 / HTE831)</name>
    <dbReference type="NCBI Taxonomy" id="221109"/>
    <lineage>
        <taxon>Bacteria</taxon>
        <taxon>Bacillati</taxon>
        <taxon>Bacillota</taxon>
        <taxon>Bacilli</taxon>
        <taxon>Bacillales</taxon>
        <taxon>Bacillaceae</taxon>
        <taxon>Oceanobacillus</taxon>
    </lineage>
</organism>
<name>SECA_OCEIH</name>
<protein>
    <recommendedName>
        <fullName evidence="1">Protein translocase subunit SecA</fullName>
        <ecNumber evidence="1">7.4.2.8</ecNumber>
    </recommendedName>
</protein>
<sequence length="838" mass="95797">MAGILTKIFGDGNQKQLKRLEKQVDLIEQLEPEMEKLEDIDFKNKTEEFKTRYKNGESLNDLLIEVYALVREASKRVLGMRPFRTQLLGAIALHEGNISEMKTGEGKTLASTMPAYLNALTDEGVHIITVNDYLAERDAKDNGLLFDFLGITVGFNHNGLSKDEKREAYLADITYGTNNEFGFDYLRDNMVLYKEQMVQRPLNFAIIDEVDSILIDEARTPLIISGSAKKSAALYQQADGFVRTLNKENDYTYDEKTKGVQLTEEGINKAENYFSIENLFDLDHVSLTHHINQALKAHVSMHRDTDYMVEEDEVVIIDQFTGRKMKGRRYSDGLHQAIEAKEGLQIQNESMTLASITFQNYFRMYNKLSGMTGTAKTEEEEFRNIYNMDVIAIPTNLPIAREDRADLIYKSMEGKFRAVVENIKERYENGQPVLVGTVAVETSELISKLLKRAGVKHEVLNAKNHFREADIIEHAGQRGSVTIATNMAGRGTDIKLGDGVKELGGLAVIGTERHESRRIDNQLRGRSGRQGDPGISQFFLSMEDELMRRFGSDNLKSMMERLGMDDSQPIESKMVSRAVESAQKRVEGNNFDARKTILSYDDVLREQREIIYKQRFEVIDDNSDLREIIENMIQSSIERVVATHTQDSDEENWNLEAIIEYSNGNLFDPDTIHTDDLKDKEANEITELLMKKVKEKYDAKEQELTPEQFREFEKVILLRTVDSKWMDHIDQMDQLRQGIHLRAYGQNDPLREYQMEGFSMFEEMVANIEDEVAKYIMKAQIRENLQRQEVVKNTQAVSGGEDSGKKKTKKPVVKSNTVKRNDPCPCGSGKKYKNCHGQ</sequence>
<keyword id="KW-0067">ATP-binding</keyword>
<keyword id="KW-1003">Cell membrane</keyword>
<keyword id="KW-0963">Cytoplasm</keyword>
<keyword id="KW-0472">Membrane</keyword>
<keyword id="KW-0479">Metal-binding</keyword>
<keyword id="KW-0547">Nucleotide-binding</keyword>
<keyword id="KW-0653">Protein transport</keyword>
<keyword id="KW-1185">Reference proteome</keyword>
<keyword id="KW-1278">Translocase</keyword>
<keyword id="KW-0811">Translocation</keyword>
<keyword id="KW-0813">Transport</keyword>
<keyword id="KW-0862">Zinc</keyword>
<proteinExistence type="inferred from homology"/>
<evidence type="ECO:0000255" key="1">
    <source>
        <dbReference type="HAMAP-Rule" id="MF_01382"/>
    </source>
</evidence>
<evidence type="ECO:0000256" key="2">
    <source>
        <dbReference type="SAM" id="MobiDB-lite"/>
    </source>
</evidence>
<gene>
    <name evidence="1" type="primary">secA</name>
    <name type="ordered locus">OB2496</name>
</gene>
<dbReference type="EC" id="7.4.2.8" evidence="1"/>
<dbReference type="EMBL" id="BA000028">
    <property type="protein sequence ID" value="BAC14452.1"/>
    <property type="molecule type" value="Genomic_DNA"/>
</dbReference>
<dbReference type="RefSeq" id="WP_011066889.1">
    <property type="nucleotide sequence ID" value="NC_004193.1"/>
</dbReference>
<dbReference type="SMR" id="Q8ENI7"/>
<dbReference type="STRING" id="221109.gene:10734748"/>
<dbReference type="KEGG" id="oih:OB2496"/>
<dbReference type="eggNOG" id="COG0653">
    <property type="taxonomic scope" value="Bacteria"/>
</dbReference>
<dbReference type="HOGENOM" id="CLU_005314_3_0_9"/>
<dbReference type="OrthoDB" id="9805579at2"/>
<dbReference type="PhylomeDB" id="Q8ENI7"/>
<dbReference type="Proteomes" id="UP000000822">
    <property type="component" value="Chromosome"/>
</dbReference>
<dbReference type="GO" id="GO:0031522">
    <property type="term" value="C:cell envelope Sec protein transport complex"/>
    <property type="evidence" value="ECO:0007669"/>
    <property type="project" value="TreeGrafter"/>
</dbReference>
<dbReference type="GO" id="GO:0005829">
    <property type="term" value="C:cytosol"/>
    <property type="evidence" value="ECO:0007669"/>
    <property type="project" value="TreeGrafter"/>
</dbReference>
<dbReference type="GO" id="GO:0005886">
    <property type="term" value="C:plasma membrane"/>
    <property type="evidence" value="ECO:0007669"/>
    <property type="project" value="UniProtKB-SubCell"/>
</dbReference>
<dbReference type="GO" id="GO:0005524">
    <property type="term" value="F:ATP binding"/>
    <property type="evidence" value="ECO:0007669"/>
    <property type="project" value="UniProtKB-UniRule"/>
</dbReference>
<dbReference type="GO" id="GO:0046872">
    <property type="term" value="F:metal ion binding"/>
    <property type="evidence" value="ECO:0007669"/>
    <property type="project" value="UniProtKB-KW"/>
</dbReference>
<dbReference type="GO" id="GO:0008564">
    <property type="term" value="F:protein-exporting ATPase activity"/>
    <property type="evidence" value="ECO:0007669"/>
    <property type="project" value="UniProtKB-EC"/>
</dbReference>
<dbReference type="GO" id="GO:0065002">
    <property type="term" value="P:intracellular protein transmembrane transport"/>
    <property type="evidence" value="ECO:0007669"/>
    <property type="project" value="UniProtKB-UniRule"/>
</dbReference>
<dbReference type="GO" id="GO:0017038">
    <property type="term" value="P:protein import"/>
    <property type="evidence" value="ECO:0007669"/>
    <property type="project" value="InterPro"/>
</dbReference>
<dbReference type="GO" id="GO:0006605">
    <property type="term" value="P:protein targeting"/>
    <property type="evidence" value="ECO:0007669"/>
    <property type="project" value="UniProtKB-UniRule"/>
</dbReference>
<dbReference type="GO" id="GO:0043952">
    <property type="term" value="P:protein transport by the Sec complex"/>
    <property type="evidence" value="ECO:0007669"/>
    <property type="project" value="TreeGrafter"/>
</dbReference>
<dbReference type="CDD" id="cd17928">
    <property type="entry name" value="DEXDc_SecA"/>
    <property type="match status" value="1"/>
</dbReference>
<dbReference type="CDD" id="cd18803">
    <property type="entry name" value="SF2_C_secA"/>
    <property type="match status" value="1"/>
</dbReference>
<dbReference type="FunFam" id="1.10.3060.10:FF:000002">
    <property type="entry name" value="Preprotein translocase subunit SecA"/>
    <property type="match status" value="1"/>
</dbReference>
<dbReference type="FunFam" id="3.40.50.300:FF:000429">
    <property type="entry name" value="Preprotein translocase subunit SecA"/>
    <property type="match status" value="1"/>
</dbReference>
<dbReference type="FunFam" id="3.90.1440.10:FF:000001">
    <property type="entry name" value="Preprotein translocase subunit SecA"/>
    <property type="match status" value="1"/>
</dbReference>
<dbReference type="Gene3D" id="1.10.3060.10">
    <property type="entry name" value="Helical scaffold and wing domains of SecA"/>
    <property type="match status" value="1"/>
</dbReference>
<dbReference type="Gene3D" id="3.40.50.300">
    <property type="entry name" value="P-loop containing nucleotide triphosphate hydrolases"/>
    <property type="match status" value="3"/>
</dbReference>
<dbReference type="Gene3D" id="3.90.1440.10">
    <property type="entry name" value="SecA, preprotein cross-linking domain"/>
    <property type="match status" value="1"/>
</dbReference>
<dbReference type="HAMAP" id="MF_01382">
    <property type="entry name" value="SecA"/>
    <property type="match status" value="1"/>
</dbReference>
<dbReference type="InterPro" id="IPR014001">
    <property type="entry name" value="Helicase_ATP-bd"/>
</dbReference>
<dbReference type="InterPro" id="IPR001650">
    <property type="entry name" value="Helicase_C-like"/>
</dbReference>
<dbReference type="InterPro" id="IPR027417">
    <property type="entry name" value="P-loop_NTPase"/>
</dbReference>
<dbReference type="InterPro" id="IPR004027">
    <property type="entry name" value="SEC_C_motif"/>
</dbReference>
<dbReference type="InterPro" id="IPR000185">
    <property type="entry name" value="SecA"/>
</dbReference>
<dbReference type="InterPro" id="IPR020937">
    <property type="entry name" value="SecA_CS"/>
</dbReference>
<dbReference type="InterPro" id="IPR011115">
    <property type="entry name" value="SecA_DEAD"/>
</dbReference>
<dbReference type="InterPro" id="IPR014018">
    <property type="entry name" value="SecA_motor_DEAD"/>
</dbReference>
<dbReference type="InterPro" id="IPR011130">
    <property type="entry name" value="SecA_preprotein_X-link_dom"/>
</dbReference>
<dbReference type="InterPro" id="IPR044722">
    <property type="entry name" value="SecA_SF2_C"/>
</dbReference>
<dbReference type="InterPro" id="IPR011116">
    <property type="entry name" value="SecA_Wing/Scaffold"/>
</dbReference>
<dbReference type="InterPro" id="IPR036266">
    <property type="entry name" value="SecA_Wing/Scaffold_sf"/>
</dbReference>
<dbReference type="InterPro" id="IPR036670">
    <property type="entry name" value="SecA_X-link_sf"/>
</dbReference>
<dbReference type="NCBIfam" id="NF006630">
    <property type="entry name" value="PRK09200.1"/>
    <property type="match status" value="1"/>
</dbReference>
<dbReference type="NCBIfam" id="NF009538">
    <property type="entry name" value="PRK12904.1"/>
    <property type="match status" value="1"/>
</dbReference>
<dbReference type="NCBIfam" id="TIGR00963">
    <property type="entry name" value="secA"/>
    <property type="match status" value="1"/>
</dbReference>
<dbReference type="PANTHER" id="PTHR30612:SF0">
    <property type="entry name" value="CHLOROPLAST PROTEIN-TRANSPORTING ATPASE"/>
    <property type="match status" value="1"/>
</dbReference>
<dbReference type="PANTHER" id="PTHR30612">
    <property type="entry name" value="SECA INNER MEMBRANE COMPONENT OF SEC PROTEIN SECRETION SYSTEM"/>
    <property type="match status" value="1"/>
</dbReference>
<dbReference type="Pfam" id="PF21090">
    <property type="entry name" value="P-loop_SecA"/>
    <property type="match status" value="1"/>
</dbReference>
<dbReference type="Pfam" id="PF02810">
    <property type="entry name" value="SEC-C"/>
    <property type="match status" value="1"/>
</dbReference>
<dbReference type="Pfam" id="PF07517">
    <property type="entry name" value="SecA_DEAD"/>
    <property type="match status" value="1"/>
</dbReference>
<dbReference type="Pfam" id="PF01043">
    <property type="entry name" value="SecA_PP_bind"/>
    <property type="match status" value="1"/>
</dbReference>
<dbReference type="Pfam" id="PF07516">
    <property type="entry name" value="SecA_SW"/>
    <property type="match status" value="1"/>
</dbReference>
<dbReference type="PRINTS" id="PR00906">
    <property type="entry name" value="SECA"/>
</dbReference>
<dbReference type="SMART" id="SM00957">
    <property type="entry name" value="SecA_DEAD"/>
    <property type="match status" value="1"/>
</dbReference>
<dbReference type="SMART" id="SM00958">
    <property type="entry name" value="SecA_PP_bind"/>
    <property type="match status" value="1"/>
</dbReference>
<dbReference type="SUPFAM" id="SSF81886">
    <property type="entry name" value="Helical scaffold and wing domains of SecA"/>
    <property type="match status" value="1"/>
</dbReference>
<dbReference type="SUPFAM" id="SSF52540">
    <property type="entry name" value="P-loop containing nucleoside triphosphate hydrolases"/>
    <property type="match status" value="2"/>
</dbReference>
<dbReference type="SUPFAM" id="SSF81767">
    <property type="entry name" value="Pre-protein crosslinking domain of SecA"/>
    <property type="match status" value="1"/>
</dbReference>
<dbReference type="PROSITE" id="PS01312">
    <property type="entry name" value="SECA"/>
    <property type="match status" value="1"/>
</dbReference>
<dbReference type="PROSITE" id="PS51196">
    <property type="entry name" value="SECA_MOTOR_DEAD"/>
    <property type="match status" value="1"/>
</dbReference>